<sequence length="108" mass="11809">MIPGEIITPSGAIEINVGRDTLRISVANTGDRPIQVGSHYHFYEVNQALEFQRELTKGTHLNIPAGTSVRFEPGDTKEVELVTIAGTEEIYGFNGLINGSLKGKKKKK</sequence>
<dbReference type="EC" id="3.5.1.5" evidence="1"/>
<dbReference type="EMBL" id="AP009552">
    <property type="protein sequence ID" value="BAG04345.1"/>
    <property type="molecule type" value="Genomic_DNA"/>
</dbReference>
<dbReference type="RefSeq" id="WP_002738732.1">
    <property type="nucleotide sequence ID" value="NC_010296.1"/>
</dbReference>
<dbReference type="SMR" id="B0JTP2"/>
<dbReference type="STRING" id="449447.MAE_45230"/>
<dbReference type="PaxDb" id="449447-MAE_45230"/>
<dbReference type="EnsemblBacteria" id="BAG04345">
    <property type="protein sequence ID" value="BAG04345"/>
    <property type="gene ID" value="MAE_45230"/>
</dbReference>
<dbReference type="KEGG" id="mar:MAE_45230"/>
<dbReference type="eggNOG" id="COG0832">
    <property type="taxonomic scope" value="Bacteria"/>
</dbReference>
<dbReference type="HOGENOM" id="CLU_129707_1_1_3"/>
<dbReference type="BioCyc" id="MAER449447:MAE_RS19600-MONOMER"/>
<dbReference type="UniPathway" id="UPA00258">
    <property type="reaction ID" value="UER00370"/>
</dbReference>
<dbReference type="Proteomes" id="UP000001510">
    <property type="component" value="Chromosome"/>
</dbReference>
<dbReference type="GO" id="GO:0035550">
    <property type="term" value="C:urease complex"/>
    <property type="evidence" value="ECO:0007669"/>
    <property type="project" value="InterPro"/>
</dbReference>
<dbReference type="GO" id="GO:0009039">
    <property type="term" value="F:urease activity"/>
    <property type="evidence" value="ECO:0007669"/>
    <property type="project" value="UniProtKB-UniRule"/>
</dbReference>
<dbReference type="GO" id="GO:0043419">
    <property type="term" value="P:urea catabolic process"/>
    <property type="evidence" value="ECO:0007669"/>
    <property type="project" value="UniProtKB-UniRule"/>
</dbReference>
<dbReference type="CDD" id="cd00407">
    <property type="entry name" value="Urease_beta"/>
    <property type="match status" value="1"/>
</dbReference>
<dbReference type="FunFam" id="2.10.150.10:FF:000001">
    <property type="entry name" value="Urease subunit beta"/>
    <property type="match status" value="1"/>
</dbReference>
<dbReference type="Gene3D" id="2.10.150.10">
    <property type="entry name" value="Urease, beta subunit"/>
    <property type="match status" value="1"/>
</dbReference>
<dbReference type="HAMAP" id="MF_01954">
    <property type="entry name" value="Urease_beta"/>
    <property type="match status" value="1"/>
</dbReference>
<dbReference type="InterPro" id="IPR002019">
    <property type="entry name" value="Urease_beta-like"/>
</dbReference>
<dbReference type="InterPro" id="IPR036461">
    <property type="entry name" value="Urease_betasu_sf"/>
</dbReference>
<dbReference type="InterPro" id="IPR050069">
    <property type="entry name" value="Urease_subunit"/>
</dbReference>
<dbReference type="NCBIfam" id="NF009682">
    <property type="entry name" value="PRK13203.1"/>
    <property type="match status" value="1"/>
</dbReference>
<dbReference type="NCBIfam" id="TIGR00192">
    <property type="entry name" value="urease_beta"/>
    <property type="match status" value="1"/>
</dbReference>
<dbReference type="PANTHER" id="PTHR33569">
    <property type="entry name" value="UREASE"/>
    <property type="match status" value="1"/>
</dbReference>
<dbReference type="PANTHER" id="PTHR33569:SF1">
    <property type="entry name" value="UREASE"/>
    <property type="match status" value="1"/>
</dbReference>
<dbReference type="Pfam" id="PF00699">
    <property type="entry name" value="Urease_beta"/>
    <property type="match status" value="1"/>
</dbReference>
<dbReference type="SUPFAM" id="SSF51278">
    <property type="entry name" value="Urease, beta-subunit"/>
    <property type="match status" value="1"/>
</dbReference>
<keyword id="KW-0963">Cytoplasm</keyword>
<keyword id="KW-0378">Hydrolase</keyword>
<comment type="catalytic activity">
    <reaction evidence="1">
        <text>urea + 2 H2O + H(+) = hydrogencarbonate + 2 NH4(+)</text>
        <dbReference type="Rhea" id="RHEA:20557"/>
        <dbReference type="ChEBI" id="CHEBI:15377"/>
        <dbReference type="ChEBI" id="CHEBI:15378"/>
        <dbReference type="ChEBI" id="CHEBI:16199"/>
        <dbReference type="ChEBI" id="CHEBI:17544"/>
        <dbReference type="ChEBI" id="CHEBI:28938"/>
        <dbReference type="EC" id="3.5.1.5"/>
    </reaction>
</comment>
<comment type="pathway">
    <text evidence="1">Nitrogen metabolism; urea degradation; CO(2) and NH(3) from urea (urease route): step 1/1.</text>
</comment>
<comment type="subunit">
    <text evidence="1">Heterotrimer of UreA (gamma), UreB (beta) and UreC (alpha) subunits. Three heterotrimers associate to form the active enzyme.</text>
</comment>
<comment type="subcellular location">
    <subcellularLocation>
        <location evidence="1">Cytoplasm</location>
    </subcellularLocation>
</comment>
<comment type="similarity">
    <text evidence="1">Belongs to the urease beta subunit family.</text>
</comment>
<proteinExistence type="inferred from homology"/>
<protein>
    <recommendedName>
        <fullName evidence="1">Urease subunit beta</fullName>
        <ecNumber evidence="1">3.5.1.5</ecNumber>
    </recommendedName>
    <alternativeName>
        <fullName evidence="1">Urea amidohydrolase subunit beta</fullName>
    </alternativeName>
</protein>
<feature type="chain" id="PRO_1000088507" description="Urease subunit beta">
    <location>
        <begin position="1"/>
        <end position="108"/>
    </location>
</feature>
<gene>
    <name evidence="1" type="primary">ureB</name>
    <name type="ordered locus">MAE_45230</name>
</gene>
<name>URE2_MICAN</name>
<evidence type="ECO:0000255" key="1">
    <source>
        <dbReference type="HAMAP-Rule" id="MF_01954"/>
    </source>
</evidence>
<organism>
    <name type="scientific">Microcystis aeruginosa (strain NIES-843 / IAM M-2473)</name>
    <dbReference type="NCBI Taxonomy" id="449447"/>
    <lineage>
        <taxon>Bacteria</taxon>
        <taxon>Bacillati</taxon>
        <taxon>Cyanobacteriota</taxon>
        <taxon>Cyanophyceae</taxon>
        <taxon>Oscillatoriophycideae</taxon>
        <taxon>Chroococcales</taxon>
        <taxon>Microcystaceae</taxon>
        <taxon>Microcystis</taxon>
    </lineage>
</organism>
<accession>B0JTP2</accession>
<reference key="1">
    <citation type="journal article" date="2007" name="DNA Res.">
        <title>Complete genomic structure of the bloom-forming toxic cyanobacterium Microcystis aeruginosa NIES-843.</title>
        <authorList>
            <person name="Kaneko T."/>
            <person name="Nakajima N."/>
            <person name="Okamoto S."/>
            <person name="Suzuki I."/>
            <person name="Tanabe Y."/>
            <person name="Tamaoki M."/>
            <person name="Nakamura Y."/>
            <person name="Kasai F."/>
            <person name="Watanabe A."/>
            <person name="Kawashima K."/>
            <person name="Kishida Y."/>
            <person name="Ono A."/>
            <person name="Shimizu Y."/>
            <person name="Takahashi C."/>
            <person name="Minami C."/>
            <person name="Fujishiro T."/>
            <person name="Kohara M."/>
            <person name="Katoh M."/>
            <person name="Nakazaki N."/>
            <person name="Nakayama S."/>
            <person name="Yamada M."/>
            <person name="Tabata S."/>
            <person name="Watanabe M.M."/>
        </authorList>
    </citation>
    <scope>NUCLEOTIDE SEQUENCE [LARGE SCALE GENOMIC DNA]</scope>
    <source>
        <strain>NIES-843 / IAM M-247</strain>
    </source>
</reference>